<keyword id="KW-0131">Cell cycle</keyword>
<keyword id="KW-0132">Cell division</keyword>
<keyword id="KW-0574">Periplasm</keyword>
<keyword id="KW-1185">Reference proteome</keyword>
<keyword id="KW-0732">Signal</keyword>
<comment type="function">
    <text evidence="1">Part of the Tol-Pal system, which plays a role in outer membrane invagination during cell division and is important for maintaining outer membrane integrity.</text>
</comment>
<comment type="subunit">
    <text evidence="1">The Tol-Pal system is composed of five core proteins: the inner membrane proteins TolA, TolQ and TolR, the periplasmic protein TolB and the outer membrane protein Pal. They form a network linking the inner and outer membranes and the peptidoglycan layer.</text>
</comment>
<comment type="subcellular location">
    <subcellularLocation>
        <location evidence="1">Periplasm</location>
    </subcellularLocation>
</comment>
<comment type="similarity">
    <text evidence="1">Belongs to the TolB family.</text>
</comment>
<name>TOLB_CERS4</name>
<protein>
    <recommendedName>
        <fullName evidence="1">Tol-Pal system protein TolB</fullName>
    </recommendedName>
</protein>
<organism>
    <name type="scientific">Cereibacter sphaeroides (strain ATCC 17023 / DSM 158 / JCM 6121 / CCUG 31486 / LMG 2827 / NBRC 12203 / NCIMB 8253 / ATH 2.4.1.)</name>
    <name type="common">Rhodobacter sphaeroides</name>
    <dbReference type="NCBI Taxonomy" id="272943"/>
    <lineage>
        <taxon>Bacteria</taxon>
        <taxon>Pseudomonadati</taxon>
        <taxon>Pseudomonadota</taxon>
        <taxon>Alphaproteobacteria</taxon>
        <taxon>Rhodobacterales</taxon>
        <taxon>Paracoccaceae</taxon>
        <taxon>Cereibacter</taxon>
    </lineage>
</organism>
<evidence type="ECO:0000255" key="1">
    <source>
        <dbReference type="HAMAP-Rule" id="MF_00671"/>
    </source>
</evidence>
<evidence type="ECO:0000256" key="2">
    <source>
        <dbReference type="SAM" id="MobiDB-lite"/>
    </source>
</evidence>
<feature type="signal peptide" evidence="1">
    <location>
        <begin position="1"/>
        <end position="26"/>
    </location>
</feature>
<feature type="chain" id="PRO_0000259078" description="Tol-Pal system protein TolB" evidence="1">
    <location>
        <begin position="27"/>
        <end position="444"/>
    </location>
</feature>
<feature type="region of interest" description="Disordered" evidence="2">
    <location>
        <begin position="281"/>
        <end position="311"/>
    </location>
</feature>
<feature type="compositionally biased region" description="Polar residues" evidence="2">
    <location>
        <begin position="281"/>
        <end position="310"/>
    </location>
</feature>
<sequence length="444" mass="47318">MTLFRTLAPMGLALALLLPAAVPAAAQQGPLRIQITEGVIEPLPFAVPDFVAENAGASELARDMARVIASDLSGTGLFREIPASAHISRVTSFEAPVAYGDWKAINAQALITGSVSASGDRVVVKFRLYDVFSDQPLGEGLQFAGSASGWRRMAHKVADVAYSRITGEGGYFDSRVVFVSESGPKNARAKRLAVMDYDGANVQYLTDSSSIVLAPRFSPTGDRILFTSYSTGFPRIYLMDVGSLATRGLAEQPGTMTFAPRFAPDGRTVAFSLEQGGNTDIYTLDTGSGTRRQLTNSPSIETAPSYSPDGSQIVFESDRSGGQQLYIMPAGGGEPRRISNGAGRYGTPVWSPRGDLIAFTKQHQGRFHIGVMRTDGSEERLLTASFLDEGPTWAPNGRVLMFTREGAGAGGQPALYSVDISGRNLKKVPLSVPASDPAWSPLLP</sequence>
<dbReference type="EMBL" id="CP000143">
    <property type="protein sequence ID" value="ABA79843.1"/>
    <property type="molecule type" value="Genomic_DNA"/>
</dbReference>
<dbReference type="RefSeq" id="WP_002720849.1">
    <property type="nucleotide sequence ID" value="NZ_CP030271.1"/>
</dbReference>
<dbReference type="RefSeq" id="YP_353744.1">
    <property type="nucleotide sequence ID" value="NC_007493.2"/>
</dbReference>
<dbReference type="SMR" id="Q3J041"/>
<dbReference type="STRING" id="272943.RSP_0669"/>
<dbReference type="MetOSite" id="Q3J041"/>
<dbReference type="EnsemblBacteria" id="ABA79843">
    <property type="protein sequence ID" value="ABA79843"/>
    <property type="gene ID" value="RSP_0669"/>
</dbReference>
<dbReference type="GeneID" id="67447417"/>
<dbReference type="KEGG" id="rsp:RSP_0669"/>
<dbReference type="PATRIC" id="fig|272943.9.peg.2619"/>
<dbReference type="eggNOG" id="COG0823">
    <property type="taxonomic scope" value="Bacteria"/>
</dbReference>
<dbReference type="OrthoDB" id="9802240at2"/>
<dbReference type="PhylomeDB" id="Q3J041"/>
<dbReference type="Proteomes" id="UP000002703">
    <property type="component" value="Chromosome 1"/>
</dbReference>
<dbReference type="GO" id="GO:0042597">
    <property type="term" value="C:periplasmic space"/>
    <property type="evidence" value="ECO:0007669"/>
    <property type="project" value="UniProtKB-SubCell"/>
</dbReference>
<dbReference type="GO" id="GO:0051301">
    <property type="term" value="P:cell division"/>
    <property type="evidence" value="ECO:0007669"/>
    <property type="project" value="UniProtKB-UniRule"/>
</dbReference>
<dbReference type="GO" id="GO:0017038">
    <property type="term" value="P:protein import"/>
    <property type="evidence" value="ECO:0007669"/>
    <property type="project" value="InterPro"/>
</dbReference>
<dbReference type="Gene3D" id="2.120.10.30">
    <property type="entry name" value="TolB, C-terminal domain"/>
    <property type="match status" value="1"/>
</dbReference>
<dbReference type="Gene3D" id="3.40.50.10070">
    <property type="entry name" value="TolB, N-terminal domain"/>
    <property type="match status" value="1"/>
</dbReference>
<dbReference type="HAMAP" id="MF_00671">
    <property type="entry name" value="TolB"/>
    <property type="match status" value="1"/>
</dbReference>
<dbReference type="InterPro" id="IPR011042">
    <property type="entry name" value="6-blade_b-propeller_TolB-like"/>
</dbReference>
<dbReference type="InterPro" id="IPR011659">
    <property type="entry name" value="PD40"/>
</dbReference>
<dbReference type="InterPro" id="IPR014167">
    <property type="entry name" value="Tol-Pal_TolB"/>
</dbReference>
<dbReference type="InterPro" id="IPR007195">
    <property type="entry name" value="TolB_N"/>
</dbReference>
<dbReference type="NCBIfam" id="TIGR02800">
    <property type="entry name" value="propeller_TolB"/>
    <property type="match status" value="1"/>
</dbReference>
<dbReference type="PANTHER" id="PTHR36842:SF1">
    <property type="entry name" value="PROTEIN TOLB"/>
    <property type="match status" value="1"/>
</dbReference>
<dbReference type="PANTHER" id="PTHR36842">
    <property type="entry name" value="PROTEIN TOLB HOMOLOG"/>
    <property type="match status" value="1"/>
</dbReference>
<dbReference type="Pfam" id="PF07676">
    <property type="entry name" value="PD40"/>
    <property type="match status" value="5"/>
</dbReference>
<dbReference type="Pfam" id="PF04052">
    <property type="entry name" value="TolB_N"/>
    <property type="match status" value="1"/>
</dbReference>
<dbReference type="SUPFAM" id="SSF52964">
    <property type="entry name" value="TolB, N-terminal domain"/>
    <property type="match status" value="1"/>
</dbReference>
<dbReference type="SUPFAM" id="SSF69304">
    <property type="entry name" value="Tricorn protease N-terminal domain"/>
    <property type="match status" value="1"/>
</dbReference>
<gene>
    <name evidence="1" type="primary">tolB</name>
    <name type="ordered locus">RHOS4_22750</name>
    <name type="ORF">RSP_0669</name>
</gene>
<proteinExistence type="inferred from homology"/>
<accession>Q3J041</accession>
<reference key="1">
    <citation type="submission" date="2005-09" db="EMBL/GenBank/DDBJ databases">
        <title>Complete sequence of chromosome 1 of Rhodobacter sphaeroides 2.4.1.</title>
        <authorList>
            <person name="Copeland A."/>
            <person name="Lucas S."/>
            <person name="Lapidus A."/>
            <person name="Barry K."/>
            <person name="Detter J.C."/>
            <person name="Glavina T."/>
            <person name="Hammon N."/>
            <person name="Israni S."/>
            <person name="Pitluck S."/>
            <person name="Richardson P."/>
            <person name="Mackenzie C."/>
            <person name="Choudhary M."/>
            <person name="Larimer F."/>
            <person name="Hauser L.J."/>
            <person name="Land M."/>
            <person name="Donohue T.J."/>
            <person name="Kaplan S."/>
        </authorList>
    </citation>
    <scope>NUCLEOTIDE SEQUENCE [LARGE SCALE GENOMIC DNA]</scope>
    <source>
        <strain>ATCC 17023 / DSM 158 / JCM 6121 / CCUG 31486 / LMG 2827 / NBRC 12203 / NCIMB 8253 / ATH 2.4.1.</strain>
    </source>
</reference>